<accession>P70340</accession>
<accession>P70442</accession>
<accession>Q6GT95</accession>
<accession>Q9CYK6</accession>
<sequence length="465" mass="52157">MNVTSLFSFTSPAVKRLLGWKQGDEEEKWAEKAVDALVKKLKKKKGAMEELEKALSCPGQPSNCVTIPRSLDGRLQVSHRKGLPHVIYCRVWRWPDLQSHHELKPLECCEFPFGSKQKEVCINPYHYKRVESPVLPPVLVPRHSEYNPQHSLLAQFRNLGQNEPHMPLNATFPDSFQQPNSHPFPHSPNSSYPNSPGGSSSTYPHSPTSSDPGSPFQMPADTPPPAYLPPEDPMAQDGSQPMDTNMMAPPLPAEISRGDVQAVAYEEPKHWCSIVYYELNNRVGEAFHASSTSVLVDGFTDPSNNKNRFCLGLLSNVNRNSTIENTRRHIGKGVHLYYVGGEVYAECLSDSSIFVQSRNCNYHHGFHPTTVCKIPSGCSLKIFNNQEFAQLLAQSVNHGFETVYELTKMCTIRMSFVKGWGAEYHRQDVTSTPCWIEIHLHGPLQWLDKVLTQMGSPHNPISSVS</sequence>
<organism>
    <name type="scientific">Mus musculus</name>
    <name type="common">Mouse</name>
    <dbReference type="NCBI Taxonomy" id="10090"/>
    <lineage>
        <taxon>Eukaryota</taxon>
        <taxon>Metazoa</taxon>
        <taxon>Chordata</taxon>
        <taxon>Craniata</taxon>
        <taxon>Vertebrata</taxon>
        <taxon>Euteleostomi</taxon>
        <taxon>Mammalia</taxon>
        <taxon>Eutheria</taxon>
        <taxon>Euarchontoglires</taxon>
        <taxon>Glires</taxon>
        <taxon>Rodentia</taxon>
        <taxon>Myomorpha</taxon>
        <taxon>Muroidea</taxon>
        <taxon>Muridae</taxon>
        <taxon>Murinae</taxon>
        <taxon>Mus</taxon>
        <taxon>Mus</taxon>
    </lineage>
</organism>
<reference key="1">
    <citation type="journal article" date="1996" name="Proc. Natl. Acad. Sci. U.S.A.">
        <title>Mammalian dwarfins are phosphorylated in response to transforming growth factor beta and are implicated in control of cell growth.</title>
        <authorList>
            <person name="Yingling J.M."/>
            <person name="Das P."/>
            <person name="Savage C."/>
            <person name="Zhang M."/>
            <person name="Padgett R.W."/>
            <person name="Wang X.-F."/>
        </authorList>
    </citation>
    <scope>NUCLEOTIDE SEQUENCE [MRNA]</scope>
    <source>
        <tissue>Embryo</tissue>
    </source>
</reference>
<reference key="2">
    <citation type="journal article" date="1997" name="Mech. Dev.">
        <title>Evidence that Mothers-against-dpp-related 1 (Madr1) plays a role in the initiation and maintenance of spermatogenesis in the mouse.</title>
        <authorList>
            <person name="Zhao G.-Q."/>
            <person name="Hogan B.L.M."/>
        </authorList>
    </citation>
    <scope>NUCLEOTIDE SEQUENCE [MRNA]</scope>
    <source>
        <tissue>Embryonic heart</tissue>
    </source>
</reference>
<reference key="3">
    <citation type="journal article" date="2000" name="Gene">
        <title>Characterization of the mouse Smad1 gene and its expression pattern in adult mouse tissues.</title>
        <authorList>
            <person name="Huang S."/>
            <person name="Flanders K.C."/>
            <person name="Roberts A.B."/>
        </authorList>
    </citation>
    <scope>NUCLEOTIDE SEQUENCE [GENOMIC DNA]</scope>
    <source>
        <strain>129/Sv</strain>
    </source>
</reference>
<reference key="4">
    <citation type="journal article" date="2005" name="Science">
        <title>The transcriptional landscape of the mammalian genome.</title>
        <authorList>
            <person name="Carninci P."/>
            <person name="Kasukawa T."/>
            <person name="Katayama S."/>
            <person name="Gough J."/>
            <person name="Frith M.C."/>
            <person name="Maeda N."/>
            <person name="Oyama R."/>
            <person name="Ravasi T."/>
            <person name="Lenhard B."/>
            <person name="Wells C."/>
            <person name="Kodzius R."/>
            <person name="Shimokawa K."/>
            <person name="Bajic V.B."/>
            <person name="Brenner S.E."/>
            <person name="Batalov S."/>
            <person name="Forrest A.R."/>
            <person name="Zavolan M."/>
            <person name="Davis M.J."/>
            <person name="Wilming L.G."/>
            <person name="Aidinis V."/>
            <person name="Allen J.E."/>
            <person name="Ambesi-Impiombato A."/>
            <person name="Apweiler R."/>
            <person name="Aturaliya R.N."/>
            <person name="Bailey T.L."/>
            <person name="Bansal M."/>
            <person name="Baxter L."/>
            <person name="Beisel K.W."/>
            <person name="Bersano T."/>
            <person name="Bono H."/>
            <person name="Chalk A.M."/>
            <person name="Chiu K.P."/>
            <person name="Choudhary V."/>
            <person name="Christoffels A."/>
            <person name="Clutterbuck D.R."/>
            <person name="Crowe M.L."/>
            <person name="Dalla E."/>
            <person name="Dalrymple B.P."/>
            <person name="de Bono B."/>
            <person name="Della Gatta G."/>
            <person name="di Bernardo D."/>
            <person name="Down T."/>
            <person name="Engstrom P."/>
            <person name="Fagiolini M."/>
            <person name="Faulkner G."/>
            <person name="Fletcher C.F."/>
            <person name="Fukushima T."/>
            <person name="Furuno M."/>
            <person name="Futaki S."/>
            <person name="Gariboldi M."/>
            <person name="Georgii-Hemming P."/>
            <person name="Gingeras T.R."/>
            <person name="Gojobori T."/>
            <person name="Green R.E."/>
            <person name="Gustincich S."/>
            <person name="Harbers M."/>
            <person name="Hayashi Y."/>
            <person name="Hensch T.K."/>
            <person name="Hirokawa N."/>
            <person name="Hill D."/>
            <person name="Huminiecki L."/>
            <person name="Iacono M."/>
            <person name="Ikeo K."/>
            <person name="Iwama A."/>
            <person name="Ishikawa T."/>
            <person name="Jakt M."/>
            <person name="Kanapin A."/>
            <person name="Katoh M."/>
            <person name="Kawasawa Y."/>
            <person name="Kelso J."/>
            <person name="Kitamura H."/>
            <person name="Kitano H."/>
            <person name="Kollias G."/>
            <person name="Krishnan S.P."/>
            <person name="Kruger A."/>
            <person name="Kummerfeld S.K."/>
            <person name="Kurochkin I.V."/>
            <person name="Lareau L.F."/>
            <person name="Lazarevic D."/>
            <person name="Lipovich L."/>
            <person name="Liu J."/>
            <person name="Liuni S."/>
            <person name="McWilliam S."/>
            <person name="Madan Babu M."/>
            <person name="Madera M."/>
            <person name="Marchionni L."/>
            <person name="Matsuda H."/>
            <person name="Matsuzawa S."/>
            <person name="Miki H."/>
            <person name="Mignone F."/>
            <person name="Miyake S."/>
            <person name="Morris K."/>
            <person name="Mottagui-Tabar S."/>
            <person name="Mulder N."/>
            <person name="Nakano N."/>
            <person name="Nakauchi H."/>
            <person name="Ng P."/>
            <person name="Nilsson R."/>
            <person name="Nishiguchi S."/>
            <person name="Nishikawa S."/>
            <person name="Nori F."/>
            <person name="Ohara O."/>
            <person name="Okazaki Y."/>
            <person name="Orlando V."/>
            <person name="Pang K.C."/>
            <person name="Pavan W.J."/>
            <person name="Pavesi G."/>
            <person name="Pesole G."/>
            <person name="Petrovsky N."/>
            <person name="Piazza S."/>
            <person name="Reed J."/>
            <person name="Reid J.F."/>
            <person name="Ring B.Z."/>
            <person name="Ringwald M."/>
            <person name="Rost B."/>
            <person name="Ruan Y."/>
            <person name="Salzberg S.L."/>
            <person name="Sandelin A."/>
            <person name="Schneider C."/>
            <person name="Schoenbach C."/>
            <person name="Sekiguchi K."/>
            <person name="Semple C.A."/>
            <person name="Seno S."/>
            <person name="Sessa L."/>
            <person name="Sheng Y."/>
            <person name="Shibata Y."/>
            <person name="Shimada H."/>
            <person name="Shimada K."/>
            <person name="Silva D."/>
            <person name="Sinclair B."/>
            <person name="Sperling S."/>
            <person name="Stupka E."/>
            <person name="Sugiura K."/>
            <person name="Sultana R."/>
            <person name="Takenaka Y."/>
            <person name="Taki K."/>
            <person name="Tammoja K."/>
            <person name="Tan S.L."/>
            <person name="Tang S."/>
            <person name="Taylor M.S."/>
            <person name="Tegner J."/>
            <person name="Teichmann S.A."/>
            <person name="Ueda H.R."/>
            <person name="van Nimwegen E."/>
            <person name="Verardo R."/>
            <person name="Wei C.L."/>
            <person name="Yagi K."/>
            <person name="Yamanishi H."/>
            <person name="Zabarovsky E."/>
            <person name="Zhu S."/>
            <person name="Zimmer A."/>
            <person name="Hide W."/>
            <person name="Bult C."/>
            <person name="Grimmond S.M."/>
            <person name="Teasdale R.D."/>
            <person name="Liu E.T."/>
            <person name="Brusic V."/>
            <person name="Quackenbush J."/>
            <person name="Wahlestedt C."/>
            <person name="Mattick J.S."/>
            <person name="Hume D.A."/>
            <person name="Kai C."/>
            <person name="Sasaki D."/>
            <person name="Tomaru Y."/>
            <person name="Fukuda S."/>
            <person name="Kanamori-Katayama M."/>
            <person name="Suzuki M."/>
            <person name="Aoki J."/>
            <person name="Arakawa T."/>
            <person name="Iida J."/>
            <person name="Imamura K."/>
            <person name="Itoh M."/>
            <person name="Kato T."/>
            <person name="Kawaji H."/>
            <person name="Kawagashira N."/>
            <person name="Kawashima T."/>
            <person name="Kojima M."/>
            <person name="Kondo S."/>
            <person name="Konno H."/>
            <person name="Nakano K."/>
            <person name="Ninomiya N."/>
            <person name="Nishio T."/>
            <person name="Okada M."/>
            <person name="Plessy C."/>
            <person name="Shibata K."/>
            <person name="Shiraki T."/>
            <person name="Suzuki S."/>
            <person name="Tagami M."/>
            <person name="Waki K."/>
            <person name="Watahiki A."/>
            <person name="Okamura-Oho Y."/>
            <person name="Suzuki H."/>
            <person name="Kawai J."/>
            <person name="Hayashizaki Y."/>
        </authorList>
    </citation>
    <scope>NUCLEOTIDE SEQUENCE [LARGE SCALE MRNA]</scope>
    <source>
        <strain>C57BL/6J</strain>
        <tissue>Embryo</tissue>
        <tissue>Oviduct</tissue>
    </source>
</reference>
<reference key="5">
    <citation type="journal article" date="2004" name="Genome Res.">
        <title>The status, quality, and expansion of the NIH full-length cDNA project: the Mammalian Gene Collection (MGC).</title>
        <authorList>
            <consortium name="The MGC Project Team"/>
        </authorList>
    </citation>
    <scope>NUCLEOTIDE SEQUENCE [LARGE SCALE MRNA]</scope>
    <source>
        <strain>C57BL/6J</strain>
        <tissue>Brain</tissue>
    </source>
</reference>
<reference key="6">
    <citation type="journal article" date="2000" name="Mol. Cell. Biol.">
        <title>Hgs (Hrs), a FYVE domain protein, is involved in Smad signaling through cooperation with SARA.</title>
        <authorList>
            <person name="Miura S."/>
            <person name="Takeshita T."/>
            <person name="Asao H."/>
            <person name="Kimura Y."/>
            <person name="Murata K."/>
            <person name="Sasaki Y."/>
            <person name="Hanai J."/>
            <person name="Beppu H."/>
            <person name="Tsukazaki T."/>
            <person name="Wrana J.L."/>
            <person name="Miyazono K."/>
            <person name="Sugamura K."/>
        </authorList>
    </citation>
    <scope>INTERACTION WITH HGS</scope>
</reference>
<reference key="7">
    <citation type="journal article" date="2001" name="Development">
        <title>Mouse embryos lacking Smad1 signals display defects in extra-embryonic tissues and germ cell formation.</title>
        <authorList>
            <person name="Tremblay K.D."/>
            <person name="Dunn N.R."/>
            <person name="Robertson E.J."/>
        </authorList>
    </citation>
    <scope>FUNCTION</scope>
    <scope>DISRUPTION PHENOTYPE</scope>
</reference>
<reference key="8">
    <citation type="journal article" date="2002" name="Mol. Cell. Biol.">
        <title>Identification of mZnf8, a mouse Kruppel-like transcriptional repressor, as a novel nuclear interaction partner of Smad1.</title>
        <authorList>
            <person name="Jiao K."/>
            <person name="Zhou Y."/>
            <person name="Hogan B.L.M."/>
        </authorList>
    </citation>
    <scope>INTERACTION WITH ZNF8</scope>
</reference>
<reference key="9">
    <citation type="journal article" date="2004" name="Development">
        <title>SMAD-mediated modulation of YY1 activity regulates the BMP response and cardiac-specific expression of a GATA4/5/6-dependent chick Nkx2.5 enhancer.</title>
        <authorList>
            <person name="Lee K.H."/>
            <person name="Evans S."/>
            <person name="Ruan T.Y."/>
            <person name="Lassar A.B."/>
        </authorList>
    </citation>
    <scope>FUNCTION</scope>
    <scope>IDENTIFICATION IN A COMPLEX WITH SMAD4 AND YY1</scope>
</reference>
<reference key="10">
    <citation type="journal article" date="2005" name="Genes Cells">
        <title>Smicl is a novel Smad interacting protein and cleavage and polyadenylation specificity factor associated protein.</title>
        <authorList>
            <person name="Collart C."/>
            <person name="Remacle J.E."/>
            <person name="Barabino S."/>
            <person name="van Grunsven L.A."/>
            <person name="Nelles L."/>
            <person name="Schellens A."/>
            <person name="Van de Putte T."/>
            <person name="Pype S."/>
            <person name="Huylebroeck D."/>
            <person name="Verschueren K."/>
        </authorList>
    </citation>
    <scope>INTERACTION WITH ZC3H3</scope>
</reference>
<reference key="11">
    <citation type="journal article" date="2006" name="Proc. Natl. Acad. Sci. U.S.A.">
        <title>Nanog binds to Smad1 and blocks bone morphogenetic protein-induced differentiation of embryonic stem cells.</title>
        <authorList>
            <person name="Suzuki A."/>
            <person name="Raya A."/>
            <person name="Kawakami Y."/>
            <person name="Morita M."/>
            <person name="Matsui T."/>
            <person name="Nakashima K."/>
            <person name="Gage F.H."/>
            <person name="Rodriguez-Esteban C."/>
            <person name="Izpisua Belmonte J.C."/>
        </authorList>
    </citation>
    <scope>INTERACTION WITH NANOG</scope>
</reference>
<reference key="12">
    <citation type="journal article" date="2008" name="Mol. Cell. Biol.">
        <title>Sizn1 is a novel protein that functions as a transcriptional coactivator of bone morphogenic protein signaling.</title>
        <authorList>
            <person name="Cho G."/>
            <person name="Lim Y."/>
            <person name="Zand D."/>
            <person name="Golden J.A."/>
        </authorList>
    </citation>
    <scope>INTERACTION WITH ZCCHC12</scope>
</reference>
<reference key="13">
    <citation type="journal article" date="2011" name="Osteoarthritis Cartilage">
        <title>Smad1 plays an essential role in bone development and postnatal bone formation.</title>
        <authorList>
            <person name="Wang M."/>
            <person name="Jin H."/>
            <person name="Tang D."/>
            <person name="Huang S."/>
            <person name="Zuscik M.J."/>
            <person name="Chen D."/>
        </authorList>
    </citation>
    <scope>FUNCTION</scope>
    <scope>DISRUPTION PHENOTYPE</scope>
</reference>
<reference key="14">
    <citation type="journal article" date="2011" name="J. Biol. Chem.">
        <title>Parathyroid hormone-responsive Smad3-related factor, Tmem119, promotes osteoblast differentiation and interacts with the bone morphogenetic protein-Runx2 pathway.</title>
        <authorList>
            <person name="Hisa I."/>
            <person name="Inoue Y."/>
            <person name="Hendy G.N."/>
            <person name="Canaff L."/>
            <person name="Kitazawa R."/>
            <person name="Kitazawa S."/>
            <person name="Komori T."/>
            <person name="Sugimoto T."/>
            <person name="Seino S."/>
            <person name="Kaji H."/>
        </authorList>
    </citation>
    <scope>INTERACTION WITH TMEM119</scope>
</reference>
<reference key="15">
    <citation type="journal article" date="2015" name="Mol. Cell. Biol.">
        <title>Nuclear export of Smads by RanBP3L regulates bone morphogenetic protein signaling and mesenchymal stem cell differentiation.</title>
        <authorList>
            <person name="Chen F."/>
            <person name="Lin X."/>
            <person name="Xu P."/>
            <person name="Zhang Z."/>
            <person name="Chen Y."/>
            <person name="Wang C."/>
            <person name="Han J."/>
            <person name="Zhao B."/>
            <person name="Xiao M."/>
            <person name="Feng X.H."/>
        </authorList>
    </citation>
    <scope>INTERACTION WITH RANBP3L</scope>
    <scope>DEPHOSPHORYLATION</scope>
    <scope>SUBCELLULAR LOCATION</scope>
</reference>
<reference key="16">
    <citation type="journal article" date="2010" name="Nucleic Acids Res.">
        <title>Structure of Smad1 MH1/DNA complex reveals distinctive rearrangements of BMP and TGF-beta effectors.</title>
        <authorList>
            <person name="Baburajendran N."/>
            <person name="Palasingam P."/>
            <person name="Narasimhan K."/>
            <person name="Sun W."/>
            <person name="Prabhakar S."/>
            <person name="Jauch R."/>
            <person name="Kolatkar P.R."/>
        </authorList>
    </citation>
    <scope>X-RAY CRYSTALLOGRAPHY (2.7 ANGSTROMS) OF 9-132 IN COMPLEX WITH DNA</scope>
    <scope>ZINC_BINDING SITES</scope>
    <scope>SUBUNIT</scope>
</reference>
<reference key="17">
    <citation type="journal article" date="2022" name="Cells Dev.">
        <title>The regulation of Msx1 by BMP4/pSmad1/5 signaling is mediated by importin7 in dental mesenchymal cells.</title>
        <authorList>
            <person name="She Y."/>
            <person name="Zhang Y."/>
            <person name="Xiao Z."/>
            <person name="Yuan G."/>
            <person name="Yang G."/>
        </authorList>
    </citation>
    <scope>FUNCTION</scope>
    <scope>SUBCELLULAR LOCATION</scope>
</reference>
<reference key="18">
    <citation type="journal article" date="2022" name="FEBS Lett.">
        <title>EGR1 plays an important role in BMP9-mediated osteoblast differentiation by promoting SMAD1/5 phosphorylation.</title>
        <authorList>
            <person name="Chiba N."/>
            <person name="Noguchi Y."/>
            <person name="Seong C.H."/>
            <person name="Ohnishi T."/>
            <person name="Matsuguchi T."/>
        </authorList>
    </citation>
    <scope>FUNCTION</scope>
    <scope>INTERACTION WITH EGR1</scope>
    <scope>PHOSPHORYLATION</scope>
</reference>
<comment type="function">
    <text evidence="1 6 8 14 16 17">Transcriptional modulator that plays a role in various cellular processes, including embryonic development, cell differentiation, and tissue homeostasis (PubMed:11566864, PubMed:15329343, PubMed:21420501, PubMed:35594155). Upon BMP ligand binding to their receptors at the cell surface, is phosphorylated by activated type I BMP receptors (BMPRIs) and associates with SMAD4 to form a heteromeric complex which translocates into the nucleus acting as transcription factor. In turn, the hetero-trimeric complex recognizes cis-regulatory elements containing Smad Binding Elements (SBEs) to modulate the outcome of the signaling network. SMAD1/OAZ1/PSMB4 complex mediates the degradation of the CREBBP/EP300 repressor SNIP1 (By similarity). Positively regulates BMP4-induced expression of odontogenic development regulator MSX1 following IPO7-mediated nuclear import (PubMed:34995814).</text>
</comment>
<comment type="subunit">
    <text evidence="1 5 7 8 9 10 11 12 13 15 17">Found in a complex with SMAD4 and YY1. Interacts with HGS, NANOG and ZCCHC12 (PubMed:11094085, PubMed:18160706). Upon C-terminus phosphorylation: forms trimers with another SMAD1 and the co-SMAD SMAD4 (By similarity). Interacts with PEBP2-alpha subunit, CREB-binding protein (CBP), p300, SMURF1, SMURF2, USP15 and HOXC8. Associates with ZNF423 or ZNF521 in response to BMP2 leading to activate transcription of BMP target genes. Interacts with SKOR1. Interacts (via MH2 domain) with LEMD3. Binding to LEMD3 results in at least a partial reduction of receptor-mediated phosphorylation. Forms a ternary complex with PSMB4 and OAZ1 before PSMB4 is incorporated into the 20S proteasome. Interacts (via MH2 domain) with FAM83G (via MH2 domain); in a SMAD4-independent manner. Interacts with ZC3H3 (PubMed:16115198). Interacts with TMEM119 (PubMed:21239498). Interacts (via MH1 and MH2 domains) with ZNF8 (PubMed:12370310). Interacts with RANBP3L; the interaction increases when SMAD1 is not phosphorylated and mediates SMAD1 nuclear export (PubMed:25755279). Interacts with EGR1; this interaction inhibits SMAD1 dephosphorylation (PubMed:35594155). Interacts with SMAD6 (By similarity). Interacts with YAP1 (By similarity). Interacts with MTMR4; negatively regulates BMP signaling through SMAD1 dephosphorylation and retention in endosomes (By similarity).</text>
</comment>
<comment type="interaction">
    <interactant intactId="EBI-6992047">
        <id>P70340</id>
    </interactant>
    <interactant intactId="EBI-1775345">
        <id>Q62073</id>
        <label>Map3k7</label>
    </interactant>
    <organismsDiffer>false</organismsDiffer>
    <experiments>3</experiments>
</comment>
<comment type="subcellular location">
    <subcellularLocation>
        <location evidence="15">Cytoplasm</location>
    </subcellularLocation>
    <subcellularLocation>
        <location evidence="15 16">Nucleus</location>
    </subcellularLocation>
    <text evidence="1 15">Cytoplasmic in the absence of ligand. Migrates to the nucleus when complexed with SMAD4. Co-localizes with LEMD3 at the nucleus inner membrane (By similarity). Exported from the nucleus to the cytoplasm when dephosphorylated PubMed:25755279.</text>
</comment>
<comment type="tissue specificity">
    <text>Ubiquitous.</text>
</comment>
<comment type="developmental stage">
    <text>Ubiquitously expressed during embryogenesis. Expression starts in some seminiferous tubules at 2 weeks of age. After mid-puberty a stage-specific expression is established. During the cycling of the seminiferous epithelium, expression initiates in the pachytene spermatocytes of stage V seminiferous tubules, peaks at stage X, then decreases as pachytene spermatocytes differentiate into secondary spermatocytes and then round spermatids.</text>
</comment>
<comment type="domain">
    <text evidence="1">The MH2 domain mediates phosphorylation-dependent trimerization through L3 loop binding of phosphoserines in the adjacent subunit.</text>
</comment>
<comment type="PTM">
    <text evidence="1 15 17">Phosphorylation of the C-terminal SVS motif by BMP type 1 receptor kinase activates SMAD1 by promoting dissociation from the receptor and trimerization with SMAD4. Phosphorylation by ERK2 MAP kinase in response to EGF or HGF prevents SMAD1 nuclear accumulation and transcriptional activity in response to BMP (By similarity). Dephosphorylation, probably by PPM1A, induces its export from the nucleus to the cytoplasm (PubMed:25755279). Dephosphorylation is inhibited by association with EGR1 (PubMed:35594155). Phosphorylation by CDK8/9 creates binding sites for YAP1, and subsequent phosphorylation by GSK3 switches off YAP1 binding and adds binding sites for SMURF1 (By similarity).</text>
</comment>
<comment type="PTM">
    <text evidence="1">Ubiquitinated by SMAD-specific E3 ubiquitin ligase SMURF1, leading to its degradation. Monoubiquitinated, leading to prevent DNA-binding. Deubiquitination by USP15 alleviates inhibition and promotes activation of TGF-beta target genes. Dephosphorylation, probably by PPM1A, induces its export from the nucleus to the cytoplasm (By similarity). Phospho-SMAD1 is ubiquitinated by CHIP leading to disruption of the SMAD1-SMAD4 complex (By similarity).</text>
</comment>
<comment type="disruption phenotype">
    <text evidence="6 14">SMAD1 deletion results in early embryonic lethality due to failure of the allantois to fuse to the chorion (PubMed:11566864). Chondrocyte-specific conditional knockout show a delay in calvarial bone mineralization and reduction of postnatal bone formation (PubMed:21420501).</text>
</comment>
<comment type="similarity">
    <text evidence="18">Belongs to the dwarfin/SMAD family.</text>
</comment>
<evidence type="ECO:0000250" key="1">
    <source>
        <dbReference type="UniProtKB" id="Q15797"/>
    </source>
</evidence>
<evidence type="ECO:0000255" key="2">
    <source>
        <dbReference type="PROSITE-ProRule" id="PRU00438"/>
    </source>
</evidence>
<evidence type="ECO:0000255" key="3">
    <source>
        <dbReference type="PROSITE-ProRule" id="PRU00439"/>
    </source>
</evidence>
<evidence type="ECO:0000256" key="4">
    <source>
        <dbReference type="SAM" id="MobiDB-lite"/>
    </source>
</evidence>
<evidence type="ECO:0000269" key="5">
    <source>
    </source>
</evidence>
<evidence type="ECO:0000269" key="6">
    <source>
    </source>
</evidence>
<evidence type="ECO:0000269" key="7">
    <source>
    </source>
</evidence>
<evidence type="ECO:0000269" key="8">
    <source>
    </source>
</evidence>
<evidence type="ECO:0000269" key="9">
    <source>
    </source>
</evidence>
<evidence type="ECO:0000269" key="10">
    <source>
    </source>
</evidence>
<evidence type="ECO:0000269" key="11">
    <source>
    </source>
</evidence>
<evidence type="ECO:0000269" key="12">
    <source>
    </source>
</evidence>
<evidence type="ECO:0000269" key="13">
    <source>
    </source>
</evidence>
<evidence type="ECO:0000269" key="14">
    <source>
    </source>
</evidence>
<evidence type="ECO:0000269" key="15">
    <source>
    </source>
</evidence>
<evidence type="ECO:0000269" key="16">
    <source>
    </source>
</evidence>
<evidence type="ECO:0000269" key="17">
    <source>
    </source>
</evidence>
<evidence type="ECO:0000305" key="18"/>
<evidence type="ECO:0007829" key="19">
    <source>
        <dbReference type="PDB" id="3KMP"/>
    </source>
</evidence>
<proteinExistence type="evidence at protein level"/>
<name>SMAD1_MOUSE</name>
<keyword id="KW-0002">3D-structure</keyword>
<keyword id="KW-0007">Acetylation</keyword>
<keyword id="KW-0963">Cytoplasm</keyword>
<keyword id="KW-0238">DNA-binding</keyword>
<keyword id="KW-0479">Metal-binding</keyword>
<keyword id="KW-0539">Nucleus</keyword>
<keyword id="KW-0597">Phosphoprotein</keyword>
<keyword id="KW-1185">Reference proteome</keyword>
<keyword id="KW-0804">Transcription</keyword>
<keyword id="KW-0805">Transcription regulation</keyword>
<keyword id="KW-0832">Ubl conjugation</keyword>
<keyword id="KW-0862">Zinc</keyword>
<protein>
    <recommendedName>
        <fullName>Mothers against decapentaplegic homolog 1</fullName>
        <shortName>MAD homolog 1</shortName>
        <shortName>Mothers against DPP homolog 1</shortName>
    </recommendedName>
    <alternativeName>
        <fullName>Dwarfin-A</fullName>
        <shortName>Dwf-A</shortName>
    </alternativeName>
    <alternativeName>
        <fullName>Mothers-against-DPP-related 1</fullName>
        <shortName>Mad-related protein 1</shortName>
        <shortName>mMad1</shortName>
    </alternativeName>
    <alternativeName>
        <fullName>SMAD family member 1</fullName>
        <shortName>SMAD 1</shortName>
        <shortName>Smad1</shortName>
    </alternativeName>
</protein>
<gene>
    <name type="primary">Smad1</name>
    <name type="synonym">Madh1</name>
    <name type="synonym">Madr1</name>
</gene>
<dbReference type="EMBL" id="U58992">
    <property type="protein sequence ID" value="AAC52785.1"/>
    <property type="molecule type" value="mRNA"/>
</dbReference>
<dbReference type="EMBL" id="U74359">
    <property type="protein sequence ID" value="AAB18256.1"/>
    <property type="molecule type" value="mRNA"/>
</dbReference>
<dbReference type="EMBL" id="AF295768">
    <property type="protein sequence ID" value="AAG41407.1"/>
    <property type="molecule type" value="Genomic_DNA"/>
</dbReference>
<dbReference type="EMBL" id="AF295763">
    <property type="protein sequence ID" value="AAG41407.1"/>
    <property type="status" value="JOINED"/>
    <property type="molecule type" value="Genomic_DNA"/>
</dbReference>
<dbReference type="EMBL" id="AF295764">
    <property type="protein sequence ID" value="AAG41407.1"/>
    <property type="status" value="JOINED"/>
    <property type="molecule type" value="Genomic_DNA"/>
</dbReference>
<dbReference type="EMBL" id="AF295765">
    <property type="protein sequence ID" value="AAG41407.1"/>
    <property type="status" value="JOINED"/>
    <property type="molecule type" value="Genomic_DNA"/>
</dbReference>
<dbReference type="EMBL" id="AF295766">
    <property type="protein sequence ID" value="AAG41407.1"/>
    <property type="status" value="JOINED"/>
    <property type="molecule type" value="Genomic_DNA"/>
</dbReference>
<dbReference type="EMBL" id="AF295767">
    <property type="protein sequence ID" value="AAG41407.1"/>
    <property type="status" value="JOINED"/>
    <property type="molecule type" value="Genomic_DNA"/>
</dbReference>
<dbReference type="EMBL" id="AK017583">
    <property type="protein sequence ID" value="BAB30820.1"/>
    <property type="molecule type" value="mRNA"/>
</dbReference>
<dbReference type="EMBL" id="AK054104">
    <property type="protein sequence ID" value="BAC35658.1"/>
    <property type="molecule type" value="mRNA"/>
</dbReference>
<dbReference type="EMBL" id="BC058693">
    <property type="protein sequence ID" value="AAH58693.1"/>
    <property type="molecule type" value="mRNA"/>
</dbReference>
<dbReference type="CCDS" id="CCDS22437.1"/>
<dbReference type="RefSeq" id="NP_032565.2">
    <property type="nucleotide sequence ID" value="NM_008539.3"/>
</dbReference>
<dbReference type="RefSeq" id="XP_006530809.1">
    <property type="nucleotide sequence ID" value="XM_006530746.5"/>
</dbReference>
<dbReference type="PDB" id="3KMP">
    <property type="method" value="X-ray"/>
    <property type="resolution" value="2.70 A"/>
    <property type="chains" value="A/B=9-132"/>
</dbReference>
<dbReference type="PDBsum" id="3KMP"/>
<dbReference type="SMR" id="P70340"/>
<dbReference type="BioGRID" id="201274">
    <property type="interactions" value="36"/>
</dbReference>
<dbReference type="ComplexPortal" id="CPX-145">
    <property type="entry name" value="Smad1 homotrimer"/>
</dbReference>
<dbReference type="ComplexPortal" id="CPX-146">
    <property type="entry name" value="SMAD1-SMAD4 complex"/>
</dbReference>
<dbReference type="CORUM" id="P70340"/>
<dbReference type="FunCoup" id="P70340">
    <property type="interactions" value="1990"/>
</dbReference>
<dbReference type="IntAct" id="P70340">
    <property type="interactions" value="9"/>
</dbReference>
<dbReference type="MINT" id="P70340"/>
<dbReference type="STRING" id="10090.ENSMUSP00000071035"/>
<dbReference type="ChEMBL" id="CHEMBL3883282"/>
<dbReference type="GlyGen" id="P70340">
    <property type="glycosylation" value="1 site, 1 N-linked glycan (1 site)"/>
</dbReference>
<dbReference type="iPTMnet" id="P70340"/>
<dbReference type="PhosphoSitePlus" id="P70340"/>
<dbReference type="SwissPalm" id="P70340"/>
<dbReference type="PaxDb" id="10090-ENSMUSP00000071035"/>
<dbReference type="PeptideAtlas" id="P70340"/>
<dbReference type="ProteomicsDB" id="261254"/>
<dbReference type="Pumba" id="P70340"/>
<dbReference type="Antibodypedia" id="3950">
    <property type="antibodies" value="1356 antibodies from 43 providers"/>
</dbReference>
<dbReference type="DNASU" id="17125"/>
<dbReference type="Ensembl" id="ENSMUST00000066091.14">
    <property type="protein sequence ID" value="ENSMUSP00000071035.8"/>
    <property type="gene ID" value="ENSMUSG00000031681.17"/>
</dbReference>
<dbReference type="GeneID" id="17125"/>
<dbReference type="KEGG" id="mmu:17125"/>
<dbReference type="UCSC" id="uc009mip.2">
    <property type="organism name" value="mouse"/>
</dbReference>
<dbReference type="AGR" id="MGI:109452"/>
<dbReference type="CTD" id="4086"/>
<dbReference type="MGI" id="MGI:109452">
    <property type="gene designation" value="Smad1"/>
</dbReference>
<dbReference type="VEuPathDB" id="HostDB:ENSMUSG00000031681"/>
<dbReference type="eggNOG" id="KOG3701">
    <property type="taxonomic scope" value="Eukaryota"/>
</dbReference>
<dbReference type="GeneTree" id="ENSGT00940000154391"/>
<dbReference type="HOGENOM" id="CLU_026736_0_2_1"/>
<dbReference type="InParanoid" id="P70340"/>
<dbReference type="OMA" id="FIQSRNC"/>
<dbReference type="OrthoDB" id="5794312at2759"/>
<dbReference type="PhylomeDB" id="P70340"/>
<dbReference type="TreeFam" id="TF314923"/>
<dbReference type="Reactome" id="R-MMU-201451">
    <property type="pathway name" value="Signaling by BMP"/>
</dbReference>
<dbReference type="Reactome" id="R-MMU-5689880">
    <property type="pathway name" value="Ub-specific processing proteases"/>
</dbReference>
<dbReference type="Reactome" id="R-MMU-8941326">
    <property type="pathway name" value="RUNX2 regulates bone development"/>
</dbReference>
<dbReference type="BioGRID-ORCS" id="17125">
    <property type="hits" value="4 hits in 81 CRISPR screens"/>
</dbReference>
<dbReference type="ChiTaRS" id="Smad1">
    <property type="organism name" value="mouse"/>
</dbReference>
<dbReference type="EvolutionaryTrace" id="P70340"/>
<dbReference type="PRO" id="PR:P70340"/>
<dbReference type="Proteomes" id="UP000000589">
    <property type="component" value="Chromosome 8"/>
</dbReference>
<dbReference type="RNAct" id="P70340">
    <property type="molecule type" value="protein"/>
</dbReference>
<dbReference type="Bgee" id="ENSMUSG00000031681">
    <property type="expression patterns" value="Expressed in ileal epithelium and 299 other cell types or tissues"/>
</dbReference>
<dbReference type="ExpressionAtlas" id="P70340">
    <property type="expression patterns" value="baseline and differential"/>
</dbReference>
<dbReference type="GO" id="GO:0000785">
    <property type="term" value="C:chromatin"/>
    <property type="evidence" value="ECO:0007669"/>
    <property type="project" value="Ensembl"/>
</dbReference>
<dbReference type="GO" id="GO:0005737">
    <property type="term" value="C:cytoplasm"/>
    <property type="evidence" value="ECO:0000314"/>
    <property type="project" value="UniProtKB"/>
</dbReference>
<dbReference type="GO" id="GO:0071144">
    <property type="term" value="C:heteromeric SMAD protein complex"/>
    <property type="evidence" value="ECO:0000266"/>
    <property type="project" value="ComplexPortal"/>
</dbReference>
<dbReference type="GO" id="GO:0071142">
    <property type="term" value="C:homomeric SMAD protein complex"/>
    <property type="evidence" value="ECO:0000353"/>
    <property type="project" value="ComplexPortal"/>
</dbReference>
<dbReference type="GO" id="GO:0001673">
    <property type="term" value="C:male germ cell nucleus"/>
    <property type="evidence" value="ECO:0007669"/>
    <property type="project" value="Ensembl"/>
</dbReference>
<dbReference type="GO" id="GO:0005637">
    <property type="term" value="C:nuclear inner membrane"/>
    <property type="evidence" value="ECO:0007669"/>
    <property type="project" value="Ensembl"/>
</dbReference>
<dbReference type="GO" id="GO:0005654">
    <property type="term" value="C:nucleoplasm"/>
    <property type="evidence" value="ECO:0000304"/>
    <property type="project" value="Reactome"/>
</dbReference>
<dbReference type="GO" id="GO:0005634">
    <property type="term" value="C:nucleus"/>
    <property type="evidence" value="ECO:0000314"/>
    <property type="project" value="UniProtKB"/>
</dbReference>
<dbReference type="GO" id="GO:0032991">
    <property type="term" value="C:protein-containing complex"/>
    <property type="evidence" value="ECO:0000266"/>
    <property type="project" value="MGI"/>
</dbReference>
<dbReference type="GO" id="GO:0005667">
    <property type="term" value="C:transcription regulator complex"/>
    <property type="evidence" value="ECO:0000314"/>
    <property type="project" value="MGI"/>
</dbReference>
<dbReference type="GO" id="GO:0070410">
    <property type="term" value="F:co-SMAD binding"/>
    <property type="evidence" value="ECO:0007669"/>
    <property type="project" value="Ensembl"/>
</dbReference>
<dbReference type="GO" id="GO:0017151">
    <property type="term" value="F:DEAD/H-box RNA helicase binding"/>
    <property type="evidence" value="ECO:0007669"/>
    <property type="project" value="Ensembl"/>
</dbReference>
<dbReference type="GO" id="GO:0001228">
    <property type="term" value="F:DNA-binding transcription activator activity, RNA polymerase II-specific"/>
    <property type="evidence" value="ECO:0007669"/>
    <property type="project" value="Ensembl"/>
</dbReference>
<dbReference type="GO" id="GO:0003700">
    <property type="term" value="F:DNA-binding transcription factor activity"/>
    <property type="evidence" value="ECO:0000314"/>
    <property type="project" value="MGI"/>
</dbReference>
<dbReference type="GO" id="GO:0000981">
    <property type="term" value="F:DNA-binding transcription factor activity, RNA polymerase II-specific"/>
    <property type="evidence" value="ECO:0000314"/>
    <property type="project" value="MGI"/>
</dbReference>
<dbReference type="GO" id="GO:0070411">
    <property type="term" value="F:I-SMAD binding"/>
    <property type="evidence" value="ECO:0007669"/>
    <property type="project" value="Ensembl"/>
</dbReference>
<dbReference type="GO" id="GO:0042802">
    <property type="term" value="F:identical protein binding"/>
    <property type="evidence" value="ECO:0000353"/>
    <property type="project" value="MGI"/>
</dbReference>
<dbReference type="GO" id="GO:0046872">
    <property type="term" value="F:metal ion binding"/>
    <property type="evidence" value="ECO:0007669"/>
    <property type="project" value="UniProtKB-KW"/>
</dbReference>
<dbReference type="GO" id="GO:0070878">
    <property type="term" value="F:primary miRNA binding"/>
    <property type="evidence" value="ECO:0000314"/>
    <property type="project" value="BHF-UCL"/>
</dbReference>
<dbReference type="GO" id="GO:0019901">
    <property type="term" value="F:protein kinase binding"/>
    <property type="evidence" value="ECO:0007669"/>
    <property type="project" value="Ensembl"/>
</dbReference>
<dbReference type="GO" id="GO:0000978">
    <property type="term" value="F:RNA polymerase II cis-regulatory region sequence-specific DNA binding"/>
    <property type="evidence" value="ECO:0000314"/>
    <property type="project" value="MGI"/>
</dbReference>
<dbReference type="GO" id="GO:0043565">
    <property type="term" value="F:sequence-specific DNA binding"/>
    <property type="evidence" value="ECO:0000314"/>
    <property type="project" value="UniProtKB"/>
</dbReference>
<dbReference type="GO" id="GO:0031625">
    <property type="term" value="F:ubiquitin protein ligase binding"/>
    <property type="evidence" value="ECO:0007669"/>
    <property type="project" value="Ensembl"/>
</dbReference>
<dbReference type="GO" id="GO:0030509">
    <property type="term" value="P:BMP signaling pathway"/>
    <property type="evidence" value="ECO:0000314"/>
    <property type="project" value="MGI"/>
</dbReference>
<dbReference type="GO" id="GO:0060348">
    <property type="term" value="P:bone development"/>
    <property type="evidence" value="ECO:0000316"/>
    <property type="project" value="MGI"/>
</dbReference>
<dbReference type="GO" id="GO:0060038">
    <property type="term" value="P:cardiac muscle cell proliferation"/>
    <property type="evidence" value="ECO:0000315"/>
    <property type="project" value="MGI"/>
</dbReference>
<dbReference type="GO" id="GO:0051216">
    <property type="term" value="P:cartilage development"/>
    <property type="evidence" value="ECO:0000316"/>
    <property type="project" value="MGI"/>
</dbReference>
<dbReference type="GO" id="GO:0008283">
    <property type="term" value="P:cell population proliferation"/>
    <property type="evidence" value="ECO:0000315"/>
    <property type="project" value="MGI"/>
</dbReference>
<dbReference type="GO" id="GO:0006351">
    <property type="term" value="P:DNA-templated transcription"/>
    <property type="evidence" value="ECO:0000266"/>
    <property type="project" value="ComplexPortal"/>
</dbReference>
<dbReference type="GO" id="GO:0009880">
    <property type="term" value="P:embryonic pattern specification"/>
    <property type="evidence" value="ECO:0000250"/>
    <property type="project" value="UniProtKB"/>
</dbReference>
<dbReference type="GO" id="GO:0007276">
    <property type="term" value="P:gamete generation"/>
    <property type="evidence" value="ECO:0000315"/>
    <property type="project" value="MGI"/>
</dbReference>
<dbReference type="GO" id="GO:0030902">
    <property type="term" value="P:hindbrain development"/>
    <property type="evidence" value="ECO:0000315"/>
    <property type="project" value="MGI"/>
</dbReference>
<dbReference type="GO" id="GO:0042592">
    <property type="term" value="P:homeostatic process"/>
    <property type="evidence" value="ECO:0000315"/>
    <property type="project" value="MGI"/>
</dbReference>
<dbReference type="GO" id="GO:0006954">
    <property type="term" value="P:inflammatory response"/>
    <property type="evidence" value="ECO:0000270"/>
    <property type="project" value="UniProtKB"/>
</dbReference>
<dbReference type="GO" id="GO:0006879">
    <property type="term" value="P:intracellular iron ion homeostasis"/>
    <property type="evidence" value="ECO:0007669"/>
    <property type="project" value="Ensembl"/>
</dbReference>
<dbReference type="GO" id="GO:0000165">
    <property type="term" value="P:MAPK cascade"/>
    <property type="evidence" value="ECO:0000315"/>
    <property type="project" value="MGI"/>
</dbReference>
<dbReference type="GO" id="GO:0001710">
    <property type="term" value="P:mesodermal cell fate commitment"/>
    <property type="evidence" value="ECO:0000316"/>
    <property type="project" value="MGI"/>
</dbReference>
<dbReference type="GO" id="GO:0030901">
    <property type="term" value="P:midbrain development"/>
    <property type="evidence" value="ECO:0000315"/>
    <property type="project" value="MGI"/>
</dbReference>
<dbReference type="GO" id="GO:0008285">
    <property type="term" value="P:negative regulation of cell population proliferation"/>
    <property type="evidence" value="ECO:0000315"/>
    <property type="project" value="MGI"/>
</dbReference>
<dbReference type="GO" id="GO:0051148">
    <property type="term" value="P:negative regulation of muscle cell differentiation"/>
    <property type="evidence" value="ECO:0000314"/>
    <property type="project" value="MGI"/>
</dbReference>
<dbReference type="GO" id="GO:0001649">
    <property type="term" value="P:osteoblast differentiation"/>
    <property type="evidence" value="ECO:0000314"/>
    <property type="project" value="MGI"/>
</dbReference>
<dbReference type="GO" id="GO:0002051">
    <property type="term" value="P:osteoblast fate commitment"/>
    <property type="evidence" value="ECO:0000316"/>
    <property type="project" value="MGI"/>
</dbReference>
<dbReference type="GO" id="GO:0061036">
    <property type="term" value="P:positive regulation of cartilage development"/>
    <property type="evidence" value="ECO:0000314"/>
    <property type="project" value="MGI"/>
</dbReference>
<dbReference type="GO" id="GO:0010628">
    <property type="term" value="P:positive regulation of gene expression"/>
    <property type="evidence" value="ECO:0000315"/>
    <property type="project" value="MGI"/>
</dbReference>
<dbReference type="GO" id="GO:1902895">
    <property type="term" value="P:positive regulation of miRNA transcription"/>
    <property type="evidence" value="ECO:0000315"/>
    <property type="project" value="BHF-UCL"/>
</dbReference>
<dbReference type="GO" id="GO:0045669">
    <property type="term" value="P:positive regulation of osteoblast differentiation"/>
    <property type="evidence" value="ECO:0000316"/>
    <property type="project" value="MGI"/>
</dbReference>
<dbReference type="GO" id="GO:1903672">
    <property type="term" value="P:positive regulation of sprouting angiogenesis"/>
    <property type="evidence" value="ECO:0007669"/>
    <property type="project" value="Ensembl"/>
</dbReference>
<dbReference type="GO" id="GO:0045944">
    <property type="term" value="P:positive regulation of transcription by RNA polymerase II"/>
    <property type="evidence" value="ECO:0000314"/>
    <property type="project" value="MGI"/>
</dbReference>
<dbReference type="GO" id="GO:0006357">
    <property type="term" value="P:regulation of transcription by RNA polymerase II"/>
    <property type="evidence" value="ECO:0000314"/>
    <property type="project" value="MGI"/>
</dbReference>
<dbReference type="GO" id="GO:0060395">
    <property type="term" value="P:SMAD protein signal transduction"/>
    <property type="evidence" value="ECO:0000316"/>
    <property type="project" value="BHF-UCL"/>
</dbReference>
<dbReference type="GO" id="GO:0048863">
    <property type="term" value="P:stem cell differentiation"/>
    <property type="evidence" value="ECO:0000314"/>
    <property type="project" value="UniProtKB"/>
</dbReference>
<dbReference type="GO" id="GO:0006366">
    <property type="term" value="P:transcription by RNA polymerase II"/>
    <property type="evidence" value="ECO:0000314"/>
    <property type="project" value="MGI"/>
</dbReference>
<dbReference type="GO" id="GO:0007179">
    <property type="term" value="P:transforming growth factor beta receptor signaling pathway"/>
    <property type="evidence" value="ECO:0000266"/>
    <property type="project" value="ComplexPortal"/>
</dbReference>
<dbReference type="GO" id="GO:0001657">
    <property type="term" value="P:ureteric bud development"/>
    <property type="evidence" value="ECO:0000270"/>
    <property type="project" value="UniProtKB"/>
</dbReference>
<dbReference type="CDD" id="cd10490">
    <property type="entry name" value="MH1_SMAD_1_5_9"/>
    <property type="match status" value="1"/>
</dbReference>
<dbReference type="CDD" id="cd10497">
    <property type="entry name" value="MH2_SMAD_1_5_9"/>
    <property type="match status" value="1"/>
</dbReference>
<dbReference type="FunFam" id="2.60.200.10:FF:000001">
    <property type="entry name" value="Mothers against decapentaplegic homolog"/>
    <property type="match status" value="1"/>
</dbReference>
<dbReference type="FunFam" id="3.90.520.10:FF:000001">
    <property type="entry name" value="Mothers against decapentaplegic homolog"/>
    <property type="match status" value="1"/>
</dbReference>
<dbReference type="Gene3D" id="2.60.200.10">
    <property type="match status" value="1"/>
</dbReference>
<dbReference type="Gene3D" id="3.90.520.10">
    <property type="entry name" value="SMAD MH1 domain"/>
    <property type="match status" value="1"/>
</dbReference>
<dbReference type="InterPro" id="IPR013790">
    <property type="entry name" value="Dwarfin"/>
</dbReference>
<dbReference type="InterPro" id="IPR003619">
    <property type="entry name" value="MAD_homology1_Dwarfin-type"/>
</dbReference>
<dbReference type="InterPro" id="IPR013019">
    <property type="entry name" value="MAD_homology_MH1"/>
</dbReference>
<dbReference type="InterPro" id="IPR017855">
    <property type="entry name" value="SMAD-like_dom_sf"/>
</dbReference>
<dbReference type="InterPro" id="IPR001132">
    <property type="entry name" value="SMAD_dom_Dwarfin-type"/>
</dbReference>
<dbReference type="InterPro" id="IPR008984">
    <property type="entry name" value="SMAD_FHA_dom_sf"/>
</dbReference>
<dbReference type="InterPro" id="IPR036578">
    <property type="entry name" value="SMAD_MH1_sf"/>
</dbReference>
<dbReference type="PANTHER" id="PTHR13703:SF23">
    <property type="entry name" value="MOTHERS AGAINST DECAPENTAPLEGIC HOMOLOG 1"/>
    <property type="match status" value="1"/>
</dbReference>
<dbReference type="PANTHER" id="PTHR13703">
    <property type="entry name" value="SMAD"/>
    <property type="match status" value="1"/>
</dbReference>
<dbReference type="Pfam" id="PF03165">
    <property type="entry name" value="MH1"/>
    <property type="match status" value="1"/>
</dbReference>
<dbReference type="Pfam" id="PF03166">
    <property type="entry name" value="MH2"/>
    <property type="match status" value="1"/>
</dbReference>
<dbReference type="SMART" id="SM00523">
    <property type="entry name" value="DWA"/>
    <property type="match status" value="1"/>
</dbReference>
<dbReference type="SMART" id="SM00524">
    <property type="entry name" value="DWB"/>
    <property type="match status" value="1"/>
</dbReference>
<dbReference type="SUPFAM" id="SSF56366">
    <property type="entry name" value="SMAD MH1 domain"/>
    <property type="match status" value="1"/>
</dbReference>
<dbReference type="SUPFAM" id="SSF49879">
    <property type="entry name" value="SMAD/FHA domain"/>
    <property type="match status" value="1"/>
</dbReference>
<dbReference type="PROSITE" id="PS51075">
    <property type="entry name" value="MH1"/>
    <property type="match status" value="1"/>
</dbReference>
<dbReference type="PROSITE" id="PS51076">
    <property type="entry name" value="MH2"/>
    <property type="match status" value="1"/>
</dbReference>
<feature type="chain" id="PRO_0000090848" description="Mothers against decapentaplegic homolog 1">
    <location>
        <begin position="1"/>
        <end position="465"/>
    </location>
</feature>
<feature type="domain" description="MH1" evidence="2">
    <location>
        <begin position="12"/>
        <end position="136"/>
    </location>
</feature>
<feature type="domain" description="MH2" evidence="3">
    <location>
        <begin position="271"/>
        <end position="465"/>
    </location>
</feature>
<feature type="region of interest" description="Disordered" evidence="4">
    <location>
        <begin position="162"/>
        <end position="246"/>
    </location>
</feature>
<feature type="region of interest" description="L3 loop" evidence="1">
    <location>
        <begin position="418"/>
        <end position="428"/>
    </location>
</feature>
<feature type="compositionally biased region" description="Low complexity" evidence="4">
    <location>
        <begin position="179"/>
        <end position="212"/>
    </location>
</feature>
<feature type="compositionally biased region" description="Pro residues" evidence="4">
    <location>
        <begin position="221"/>
        <end position="232"/>
    </location>
</feature>
<feature type="binding site">
    <location>
        <position position="64"/>
    </location>
    <ligand>
        <name>Zn(2+)</name>
        <dbReference type="ChEBI" id="CHEBI:29105"/>
    </ligand>
</feature>
<feature type="binding site">
    <location>
        <position position="109"/>
    </location>
    <ligand>
        <name>Zn(2+)</name>
        <dbReference type="ChEBI" id="CHEBI:29105"/>
    </ligand>
</feature>
<feature type="binding site">
    <location>
        <position position="121"/>
    </location>
    <ligand>
        <name>Zn(2+)</name>
        <dbReference type="ChEBI" id="CHEBI:29105"/>
    </ligand>
</feature>
<feature type="binding site">
    <location>
        <position position="126"/>
    </location>
    <ligand>
        <name>Zn(2+)</name>
        <dbReference type="ChEBI" id="CHEBI:29105"/>
    </ligand>
</feature>
<feature type="modified residue" description="N-acetylmethionine" evidence="1">
    <location>
        <position position="1"/>
    </location>
</feature>
<feature type="modified residue" description="Phosphothreonine; by MINK1, TNIK and MAP4K4" evidence="1">
    <location>
        <position position="322"/>
    </location>
</feature>
<feature type="modified residue" description="Phosphoserine" evidence="1 3">
    <location>
        <position position="463"/>
    </location>
</feature>
<feature type="modified residue" description="Phosphoserine" evidence="1 3">
    <location>
        <position position="465"/>
    </location>
</feature>
<feature type="sequence conflict" description="In Ref. 1; AAC52785 and 3; AAG41407." evidence="18" ref="1 3">
    <original>P</original>
    <variation>S</variation>
    <location>
        <position position="95"/>
    </location>
</feature>
<feature type="sequence conflict" description="In Ref. 1; AAC52785 and 3; AAG41407." evidence="18" ref="1 3">
    <original>R</original>
    <variation>K</variation>
    <location>
        <position position="142"/>
    </location>
</feature>
<feature type="sequence conflict" description="In Ref. 2; AAB18256." evidence="18" ref="2">
    <original>SS</original>
    <variation>QG</variation>
    <location>
        <begin position="199"/>
        <end position="200"/>
    </location>
</feature>
<feature type="sequence conflict" description="In Ref. 2; AAB18256." evidence="18" ref="2">
    <original>A</original>
    <variation>E</variation>
    <location>
        <position position="393"/>
    </location>
</feature>
<feature type="helix" evidence="19">
    <location>
        <begin position="12"/>
        <end position="19"/>
    </location>
</feature>
<feature type="helix" evidence="19">
    <location>
        <begin position="25"/>
        <end position="41"/>
    </location>
</feature>
<feature type="helix" evidence="19">
    <location>
        <begin position="47"/>
        <end position="56"/>
    </location>
</feature>
<feature type="strand" evidence="19">
    <location>
        <begin position="66"/>
        <end position="68"/>
    </location>
</feature>
<feature type="strand" evidence="19">
    <location>
        <begin position="71"/>
        <end position="73"/>
    </location>
</feature>
<feature type="strand" evidence="19">
    <location>
        <begin position="75"/>
        <end position="77"/>
    </location>
</feature>
<feature type="strand" evidence="19">
    <location>
        <begin position="80"/>
        <end position="82"/>
    </location>
</feature>
<feature type="helix" evidence="19">
    <location>
        <begin position="84"/>
        <end position="92"/>
    </location>
</feature>
<feature type="helix" evidence="19">
    <location>
        <begin position="100"/>
        <end position="102"/>
    </location>
</feature>
<feature type="strand" evidence="19">
    <location>
        <begin position="103"/>
        <end position="105"/>
    </location>
</feature>
<feature type="helix" evidence="19">
    <location>
        <begin position="113"/>
        <end position="115"/>
    </location>
</feature>
<feature type="strand" evidence="19">
    <location>
        <begin position="118"/>
        <end position="121"/>
    </location>
</feature>
<feature type="helix" evidence="19">
    <location>
        <begin position="124"/>
        <end position="126"/>
    </location>
</feature>
<feature type="strand" evidence="19">
    <location>
        <begin position="127"/>
        <end position="129"/>
    </location>
</feature>